<reference key="1">
    <citation type="journal article" date="2008" name="J. Bacteriol.">
        <title>The complete genome sequence of Escherichia coli DH10B: insights into the biology of a laboratory workhorse.</title>
        <authorList>
            <person name="Durfee T."/>
            <person name="Nelson R."/>
            <person name="Baldwin S."/>
            <person name="Plunkett G. III"/>
            <person name="Burland V."/>
            <person name="Mau B."/>
            <person name="Petrosino J.F."/>
            <person name="Qin X."/>
            <person name="Muzny D.M."/>
            <person name="Ayele M."/>
            <person name="Gibbs R.A."/>
            <person name="Csorgo B."/>
            <person name="Posfai G."/>
            <person name="Weinstock G.M."/>
            <person name="Blattner F.R."/>
        </authorList>
    </citation>
    <scope>NUCLEOTIDE SEQUENCE [LARGE SCALE GENOMIC DNA]</scope>
    <source>
        <strain>K12 / DH10B</strain>
    </source>
</reference>
<protein>
    <recommendedName>
        <fullName evidence="1">Succinylornithine transaminase</fullName>
        <ecNumber evidence="1">2.6.1.81</ecNumber>
    </recommendedName>
    <alternativeName>
        <fullName evidence="1">Succinylornithine aminotransferase</fullName>
    </alternativeName>
</protein>
<organism>
    <name type="scientific">Escherichia coli (strain K12 / DH10B)</name>
    <dbReference type="NCBI Taxonomy" id="316385"/>
    <lineage>
        <taxon>Bacteria</taxon>
        <taxon>Pseudomonadati</taxon>
        <taxon>Pseudomonadota</taxon>
        <taxon>Gammaproteobacteria</taxon>
        <taxon>Enterobacterales</taxon>
        <taxon>Enterobacteriaceae</taxon>
        <taxon>Escherichia</taxon>
    </lineage>
</organism>
<name>ASTC_ECODH</name>
<feature type="chain" id="PRO_1000164381" description="Succinylornithine transaminase">
    <location>
        <begin position="1"/>
        <end position="406"/>
    </location>
</feature>
<feature type="modified residue" description="N6-(pyridoxal phosphate)lysine" evidence="1">
    <location>
        <position position="252"/>
    </location>
</feature>
<accession>B1XGK9</accession>
<sequence length="406" mass="43665">MSQPITRENFDEWMIPVYAPAPFIPVRGEGSRLWDQQGKEYIDFAGGIAVNALGHAHPELREALNEQASKFWHTGNGYTNEPVLRLAKKLIDATFADRVFFCNSGAEANEAALKLARKFAHDRYGSHKSGIVAFKNAFHGRTLFTVSAGGQPAYSQDFAPLPADIRHAAYNDINSASALIDDSTCAVIVEPIQGEGGVVPASNAFLQGLRELCNRHNALLIFDEVQTGVGRTGELYAYMHYGVTPDLLTTAKALGGGFPVGALLATEECARVMTVGTHGTTYGGNPLASAVAGKVLELINTPEMLNGVKQRHDWFVERLNTINHRYGLFSEVRGLGLLIGCVLNADYAGQAKQISQEAAKAGVMVLIAGGNVVRFAPALNVSEEEVTTGLDRFAAACEHFVSRGSS</sequence>
<keyword id="KW-0032">Aminotransferase</keyword>
<keyword id="KW-0056">Arginine metabolism</keyword>
<keyword id="KW-0663">Pyridoxal phosphate</keyword>
<keyword id="KW-0808">Transferase</keyword>
<proteinExistence type="inferred from homology"/>
<gene>
    <name evidence="1" type="primary">astC</name>
    <name evidence="1" type="synonym">argM</name>
    <name type="ordered locus">ECDH10B_1886</name>
</gene>
<dbReference type="EC" id="2.6.1.81" evidence="1"/>
<dbReference type="EMBL" id="CP000948">
    <property type="protein sequence ID" value="ACB02947.1"/>
    <property type="molecule type" value="Genomic_DNA"/>
</dbReference>
<dbReference type="RefSeq" id="WP_000081983.1">
    <property type="nucleotide sequence ID" value="NC_010473.1"/>
</dbReference>
<dbReference type="SMR" id="B1XGK9"/>
<dbReference type="GeneID" id="75203054"/>
<dbReference type="KEGG" id="ecd:ECDH10B_1886"/>
<dbReference type="HOGENOM" id="CLU_016922_10_1_6"/>
<dbReference type="UniPathway" id="UPA00185">
    <property type="reaction ID" value="UER00281"/>
</dbReference>
<dbReference type="GO" id="GO:0042802">
    <property type="term" value="F:identical protein binding"/>
    <property type="evidence" value="ECO:0007669"/>
    <property type="project" value="TreeGrafter"/>
</dbReference>
<dbReference type="GO" id="GO:0030170">
    <property type="term" value="F:pyridoxal phosphate binding"/>
    <property type="evidence" value="ECO:0007669"/>
    <property type="project" value="UniProtKB-UniRule"/>
</dbReference>
<dbReference type="GO" id="GO:0043825">
    <property type="term" value="F:succinylornithine transaminase activity"/>
    <property type="evidence" value="ECO:0007669"/>
    <property type="project" value="UniProtKB-EC"/>
</dbReference>
<dbReference type="GO" id="GO:1901607">
    <property type="term" value="P:alpha-amino acid biosynthetic process"/>
    <property type="evidence" value="ECO:0007669"/>
    <property type="project" value="UniProtKB-ARBA"/>
</dbReference>
<dbReference type="GO" id="GO:0019544">
    <property type="term" value="P:arginine catabolic process to glutamate"/>
    <property type="evidence" value="ECO:0007669"/>
    <property type="project" value="UniProtKB-UniRule"/>
</dbReference>
<dbReference type="GO" id="GO:0019545">
    <property type="term" value="P:arginine catabolic process to succinate"/>
    <property type="evidence" value="ECO:0007669"/>
    <property type="project" value="UniProtKB-UniRule"/>
</dbReference>
<dbReference type="GO" id="GO:0006593">
    <property type="term" value="P:ornithine catabolic process"/>
    <property type="evidence" value="ECO:0007669"/>
    <property type="project" value="InterPro"/>
</dbReference>
<dbReference type="CDD" id="cd00610">
    <property type="entry name" value="OAT_like"/>
    <property type="match status" value="1"/>
</dbReference>
<dbReference type="FunFam" id="3.40.640.10:FF:000004">
    <property type="entry name" value="Acetylornithine aminotransferase"/>
    <property type="match status" value="1"/>
</dbReference>
<dbReference type="FunFam" id="3.90.1150.10:FF:000009">
    <property type="entry name" value="Succinylornithine transaminase"/>
    <property type="match status" value="1"/>
</dbReference>
<dbReference type="Gene3D" id="3.90.1150.10">
    <property type="entry name" value="Aspartate Aminotransferase, domain 1"/>
    <property type="match status" value="1"/>
</dbReference>
<dbReference type="Gene3D" id="3.40.640.10">
    <property type="entry name" value="Type I PLP-dependent aspartate aminotransferase-like (Major domain)"/>
    <property type="match status" value="1"/>
</dbReference>
<dbReference type="HAMAP" id="MF_01107">
    <property type="entry name" value="ArgD_aminotrans_3"/>
    <property type="match status" value="1"/>
</dbReference>
<dbReference type="HAMAP" id="MF_01173">
    <property type="entry name" value="AstC_aminotrans_3"/>
    <property type="match status" value="1"/>
</dbReference>
<dbReference type="InterPro" id="IPR017652">
    <property type="entry name" value="Ac/SucOrn_transaminase_bac"/>
</dbReference>
<dbReference type="InterPro" id="IPR004636">
    <property type="entry name" value="AcOrn/SuccOrn_fam"/>
</dbReference>
<dbReference type="InterPro" id="IPR005814">
    <property type="entry name" value="Aminotrans_3"/>
</dbReference>
<dbReference type="InterPro" id="IPR049704">
    <property type="entry name" value="Aminotrans_3_PPA_site"/>
</dbReference>
<dbReference type="InterPro" id="IPR050103">
    <property type="entry name" value="Class-III_PLP-dep_AT"/>
</dbReference>
<dbReference type="InterPro" id="IPR015424">
    <property type="entry name" value="PyrdxlP-dep_Trfase"/>
</dbReference>
<dbReference type="InterPro" id="IPR015421">
    <property type="entry name" value="PyrdxlP-dep_Trfase_major"/>
</dbReference>
<dbReference type="InterPro" id="IPR015422">
    <property type="entry name" value="PyrdxlP-dep_Trfase_small"/>
</dbReference>
<dbReference type="InterPro" id="IPR026330">
    <property type="entry name" value="SOAT"/>
</dbReference>
<dbReference type="NCBIfam" id="TIGR03246">
    <property type="entry name" value="arg_catab_astC"/>
    <property type="match status" value="1"/>
</dbReference>
<dbReference type="NCBIfam" id="TIGR00707">
    <property type="entry name" value="argD"/>
    <property type="match status" value="1"/>
</dbReference>
<dbReference type="NCBIfam" id="NF002325">
    <property type="entry name" value="PRK01278.1"/>
    <property type="match status" value="1"/>
</dbReference>
<dbReference type="NCBIfam" id="NF003468">
    <property type="entry name" value="PRK05093.1"/>
    <property type="match status" value="1"/>
</dbReference>
<dbReference type="NCBIfam" id="NF009047">
    <property type="entry name" value="PRK12381.1"/>
    <property type="match status" value="1"/>
</dbReference>
<dbReference type="PANTHER" id="PTHR11986">
    <property type="entry name" value="AMINOTRANSFERASE CLASS III"/>
    <property type="match status" value="1"/>
</dbReference>
<dbReference type="PANTHER" id="PTHR11986:SF113">
    <property type="entry name" value="SUCCINYLORNITHINE TRANSAMINASE"/>
    <property type="match status" value="1"/>
</dbReference>
<dbReference type="Pfam" id="PF00202">
    <property type="entry name" value="Aminotran_3"/>
    <property type="match status" value="1"/>
</dbReference>
<dbReference type="PIRSF" id="PIRSF000521">
    <property type="entry name" value="Transaminase_4ab_Lys_Orn"/>
    <property type="match status" value="1"/>
</dbReference>
<dbReference type="SUPFAM" id="SSF53383">
    <property type="entry name" value="PLP-dependent transferases"/>
    <property type="match status" value="1"/>
</dbReference>
<dbReference type="PROSITE" id="PS00600">
    <property type="entry name" value="AA_TRANSFER_CLASS_3"/>
    <property type="match status" value="1"/>
</dbReference>
<evidence type="ECO:0000255" key="1">
    <source>
        <dbReference type="HAMAP-Rule" id="MF_01173"/>
    </source>
</evidence>
<comment type="function">
    <text evidence="1">Catalyzes the transamination of N(2)-succinylornithine and alpha-ketoglutarate into N(2)-succinylglutamate semialdehyde and glutamate. Can also act as an acetylornithine aminotransferase.</text>
</comment>
<comment type="catalytic activity">
    <reaction evidence="1">
        <text>N(2)-succinyl-L-ornithine + 2-oxoglutarate = N-succinyl-L-glutamate 5-semialdehyde + L-glutamate</text>
        <dbReference type="Rhea" id="RHEA:16953"/>
        <dbReference type="ChEBI" id="CHEBI:16810"/>
        <dbReference type="ChEBI" id="CHEBI:29985"/>
        <dbReference type="ChEBI" id="CHEBI:58514"/>
        <dbReference type="ChEBI" id="CHEBI:58520"/>
        <dbReference type="EC" id="2.6.1.81"/>
    </reaction>
</comment>
<comment type="cofactor">
    <cofactor evidence="1">
        <name>pyridoxal 5'-phosphate</name>
        <dbReference type="ChEBI" id="CHEBI:597326"/>
    </cofactor>
</comment>
<comment type="pathway">
    <text evidence="1">Amino-acid degradation; L-arginine degradation via AST pathway; L-glutamate and succinate from L-arginine: step 3/5.</text>
</comment>
<comment type="similarity">
    <text evidence="1">Belongs to the class-III pyridoxal-phosphate-dependent aminotransferase family. AstC subfamily.</text>
</comment>